<evidence type="ECO:0000255" key="1">
    <source>
        <dbReference type="HAMAP-Rule" id="MF_02083"/>
    </source>
</evidence>
<sequence length="347" mass="38850">MQVGIVGGSGYIAGQLLRMLAFHKDIEIKIVSSKSHAGEKLSRVHPDLLNILDLRFSDMDPVDLASRVDLVFLALPHGTSINYVPDIYEIGTKIIDMSADFRLKDPDLYREWYGFEHNYPDLLEKFVYGMPEFHRNEIKNSRYVSVPGCIASSTIYSVAPFSMLNLDNNIVTVDAKVGSSGSGSGTDSSKNYSERYNSVRAYKPVHHRHTPEIEQEIKYISGKNIKIAMSAHSVNMVRGILTTSNIFIDLDEPDALSQLREFYKNEKFIRLIFDRKSNFRYPDPKTVIGTNFADLGVISDGYIKRIVSLGAIDNMIKGAAGNAIQSMNIMNHFDESEGLLIPAAFPV</sequence>
<organism>
    <name type="scientific">Picrophilus torridus (strain ATCC 700027 / DSM 9790 / JCM 10055 / NBRC 100828 / KAW 2/3)</name>
    <dbReference type="NCBI Taxonomy" id="1122961"/>
    <lineage>
        <taxon>Archaea</taxon>
        <taxon>Methanobacteriati</taxon>
        <taxon>Thermoplasmatota</taxon>
        <taxon>Thermoplasmata</taxon>
        <taxon>Thermoplasmatales</taxon>
        <taxon>Picrophilaceae</taxon>
        <taxon>Picrophilus</taxon>
    </lineage>
</organism>
<gene>
    <name evidence="1" type="primary">lysY</name>
    <name type="ordered locus">PTO1472</name>
</gene>
<proteinExistence type="inferred from homology"/>
<keyword id="KW-0028">Amino-acid biosynthesis</keyword>
<keyword id="KW-0055">Arginine biosynthesis</keyword>
<keyword id="KW-0963">Cytoplasm</keyword>
<keyword id="KW-0457">Lysine biosynthesis</keyword>
<keyword id="KW-0521">NADP</keyword>
<keyword id="KW-0560">Oxidoreductase</keyword>
<comment type="function">
    <text evidence="1">Involved in both the arginine and lysine biosynthetic pathways.</text>
</comment>
<comment type="catalytic activity">
    <reaction evidence="1">
        <text>[amino-group carrier protein]-C-terminal-N-(1-carboxy-5-oxopentan-1-yl)-L-glutamine + phosphate + NADP(+) = [amino-group carrier protein]-C-terminal-N-(1-carboxy-5-phosphooxy-5-oxopentan-1-yl)-L-glutamine + NADPH + H(+)</text>
        <dbReference type="Rhea" id="RHEA:41948"/>
        <dbReference type="Rhea" id="RHEA-COMP:9712"/>
        <dbReference type="Rhea" id="RHEA-COMP:9714"/>
        <dbReference type="ChEBI" id="CHEBI:15378"/>
        <dbReference type="ChEBI" id="CHEBI:43474"/>
        <dbReference type="ChEBI" id="CHEBI:57783"/>
        <dbReference type="ChEBI" id="CHEBI:58349"/>
        <dbReference type="ChEBI" id="CHEBI:78499"/>
        <dbReference type="ChEBI" id="CHEBI:78501"/>
        <dbReference type="EC" id="1.2.1.103"/>
    </reaction>
</comment>
<comment type="catalytic activity">
    <reaction evidence="1">
        <text>[amino-group carrier protein]-C-terminal-gamma-(L-glutamyl-5-semialdehyde)-L-glutamate + phosphate + NADP(+) = [amino-group carrier protein]-C-terminal-gamma-(5-phospho-L-glutamyl)-L-glutamate + NADPH + H(+)</text>
        <dbReference type="Rhea" id="RHEA:52668"/>
        <dbReference type="Rhea" id="RHEA-COMP:13313"/>
        <dbReference type="Rhea" id="RHEA-COMP:13327"/>
        <dbReference type="ChEBI" id="CHEBI:15378"/>
        <dbReference type="ChEBI" id="CHEBI:43474"/>
        <dbReference type="ChEBI" id="CHEBI:57783"/>
        <dbReference type="ChEBI" id="CHEBI:58349"/>
        <dbReference type="ChEBI" id="CHEBI:136717"/>
        <dbReference type="ChEBI" id="CHEBI:136761"/>
        <dbReference type="EC" id="1.2.1.106"/>
    </reaction>
</comment>
<comment type="pathway">
    <text evidence="1">Amino-acid biosynthesis; L-lysine biosynthesis via AAA pathway; L-lysine from L-alpha-aminoadipate (Thermus route): step 3/5.</text>
</comment>
<comment type="pathway">
    <text evidence="1">Amino-acid biosynthesis; L-arginine biosynthesis.</text>
</comment>
<comment type="subcellular location">
    <subcellularLocation>
        <location evidence="1">Cytoplasm</location>
    </subcellularLocation>
</comment>
<comment type="similarity">
    <text evidence="1">Belongs to the NAGSA dehydrogenase family. Type 1 subfamily. LysY sub-subfamily.</text>
</comment>
<dbReference type="EC" id="1.2.1.103" evidence="1"/>
<dbReference type="EC" id="1.2.1.106" evidence="1"/>
<dbReference type="EMBL" id="AE017261">
    <property type="protein sequence ID" value="AAT44057.1"/>
    <property type="molecule type" value="Genomic_DNA"/>
</dbReference>
<dbReference type="RefSeq" id="WP_011178273.1">
    <property type="nucleotide sequence ID" value="NC_005877.1"/>
</dbReference>
<dbReference type="SMR" id="Q6KYZ5"/>
<dbReference type="FunCoup" id="Q6KYZ5">
    <property type="interactions" value="76"/>
</dbReference>
<dbReference type="STRING" id="263820.PTO1472"/>
<dbReference type="PaxDb" id="263820-PTO1472"/>
<dbReference type="GeneID" id="2844688"/>
<dbReference type="KEGG" id="pto:PTO1472"/>
<dbReference type="eggNOG" id="arCOG00495">
    <property type="taxonomic scope" value="Archaea"/>
</dbReference>
<dbReference type="HOGENOM" id="CLU_006384_0_1_2"/>
<dbReference type="InParanoid" id="Q6KYZ5"/>
<dbReference type="OrthoDB" id="372053at2157"/>
<dbReference type="UniPathway" id="UPA00033">
    <property type="reaction ID" value="UER00037"/>
</dbReference>
<dbReference type="UniPathway" id="UPA00068"/>
<dbReference type="Proteomes" id="UP000000438">
    <property type="component" value="Chromosome"/>
</dbReference>
<dbReference type="GO" id="GO:0005737">
    <property type="term" value="C:cytoplasm"/>
    <property type="evidence" value="ECO:0007669"/>
    <property type="project" value="UniProtKB-SubCell"/>
</dbReference>
<dbReference type="GO" id="GO:0043870">
    <property type="term" value="F:N-acetyl-gamma-aminoadipyl-phosphate reductase activity"/>
    <property type="evidence" value="ECO:0007669"/>
    <property type="project" value="RHEA"/>
</dbReference>
<dbReference type="GO" id="GO:0003942">
    <property type="term" value="F:N-acetyl-gamma-glutamyl-phosphate reductase activity"/>
    <property type="evidence" value="ECO:0007669"/>
    <property type="project" value="InterPro"/>
</dbReference>
<dbReference type="GO" id="GO:0051287">
    <property type="term" value="F:NAD binding"/>
    <property type="evidence" value="ECO:0007669"/>
    <property type="project" value="InterPro"/>
</dbReference>
<dbReference type="GO" id="GO:0070401">
    <property type="term" value="F:NADP+ binding"/>
    <property type="evidence" value="ECO:0007669"/>
    <property type="project" value="InterPro"/>
</dbReference>
<dbReference type="GO" id="GO:0042450">
    <property type="term" value="P:arginine biosynthetic process via ornithine"/>
    <property type="evidence" value="ECO:0007669"/>
    <property type="project" value="UniProtKB-UniRule"/>
</dbReference>
<dbReference type="GO" id="GO:0006526">
    <property type="term" value="P:L-arginine biosynthetic process"/>
    <property type="evidence" value="ECO:0007669"/>
    <property type="project" value="UniProtKB-UniPathway"/>
</dbReference>
<dbReference type="GO" id="GO:0019878">
    <property type="term" value="P:lysine biosynthetic process via aminoadipic acid"/>
    <property type="evidence" value="ECO:0007669"/>
    <property type="project" value="UniProtKB-UniRule"/>
</dbReference>
<dbReference type="CDD" id="cd17895">
    <property type="entry name" value="AGPR_1_N"/>
    <property type="match status" value="1"/>
</dbReference>
<dbReference type="Gene3D" id="3.30.360.10">
    <property type="entry name" value="Dihydrodipicolinate Reductase, domain 2"/>
    <property type="match status" value="1"/>
</dbReference>
<dbReference type="Gene3D" id="3.40.50.720">
    <property type="entry name" value="NAD(P)-binding Rossmann-like Domain"/>
    <property type="match status" value="1"/>
</dbReference>
<dbReference type="HAMAP" id="MF_00150">
    <property type="entry name" value="ArgC_type1"/>
    <property type="match status" value="1"/>
</dbReference>
<dbReference type="HAMAP" id="MF_02083">
    <property type="entry name" value="LysY"/>
    <property type="match status" value="1"/>
</dbReference>
<dbReference type="InterPro" id="IPR000706">
    <property type="entry name" value="AGPR_type-1"/>
</dbReference>
<dbReference type="InterPro" id="IPR037535">
    <property type="entry name" value="LysY"/>
</dbReference>
<dbReference type="InterPro" id="IPR036291">
    <property type="entry name" value="NAD(P)-bd_dom_sf"/>
</dbReference>
<dbReference type="InterPro" id="IPR050085">
    <property type="entry name" value="NAGSA_dehydrogenase"/>
</dbReference>
<dbReference type="InterPro" id="IPR000534">
    <property type="entry name" value="Semialdehyde_DH_NAD-bd"/>
</dbReference>
<dbReference type="NCBIfam" id="TIGR01850">
    <property type="entry name" value="argC"/>
    <property type="match status" value="1"/>
</dbReference>
<dbReference type="PANTHER" id="PTHR32338:SF11">
    <property type="entry name" value="[LYSW]-L-2-AMINOADIPATE_[LYSW]-L-GLUTAMATE PHOSPHATE REDUCTASE-RELATED"/>
    <property type="match status" value="1"/>
</dbReference>
<dbReference type="PANTHER" id="PTHR32338">
    <property type="entry name" value="N-ACETYL-GAMMA-GLUTAMYL-PHOSPHATE REDUCTASE, CHLOROPLASTIC-RELATED-RELATED"/>
    <property type="match status" value="1"/>
</dbReference>
<dbReference type="Pfam" id="PF01118">
    <property type="entry name" value="Semialdhyde_dh"/>
    <property type="match status" value="1"/>
</dbReference>
<dbReference type="Pfam" id="PF22698">
    <property type="entry name" value="Semialdhyde_dhC_1"/>
    <property type="match status" value="1"/>
</dbReference>
<dbReference type="SMART" id="SM00859">
    <property type="entry name" value="Semialdhyde_dh"/>
    <property type="match status" value="1"/>
</dbReference>
<dbReference type="SUPFAM" id="SSF55347">
    <property type="entry name" value="Glyceraldehyde-3-phosphate dehydrogenase-like, C-terminal domain"/>
    <property type="match status" value="1"/>
</dbReference>
<dbReference type="SUPFAM" id="SSF51735">
    <property type="entry name" value="NAD(P)-binding Rossmann-fold domains"/>
    <property type="match status" value="1"/>
</dbReference>
<protein>
    <recommendedName>
        <fullName evidence="1">Putative [LysW]-L-2-aminoadipate/[LysW]-L-glutamate phosphate reductase</fullName>
        <ecNumber evidence="1">1.2.1.103</ecNumber>
        <ecNumber evidence="1">1.2.1.106</ecNumber>
    </recommendedName>
</protein>
<reference key="1">
    <citation type="journal article" date="2004" name="Proc. Natl. Acad. Sci. U.S.A.">
        <title>Genome sequence of Picrophilus torridus and its implications for life around pH 0.</title>
        <authorList>
            <person name="Fuetterer O."/>
            <person name="Angelov A."/>
            <person name="Liesegang H."/>
            <person name="Gottschalk G."/>
            <person name="Schleper C."/>
            <person name="Schepers B."/>
            <person name="Dock C."/>
            <person name="Antranikian G."/>
            <person name="Liebl W."/>
        </authorList>
    </citation>
    <scope>NUCLEOTIDE SEQUENCE [LARGE SCALE GENOMIC DNA]</scope>
    <source>
        <strain>ATCC 700027 / DSM 9790 / JCM 10055 / NBRC 100828 / KAW 2/3</strain>
    </source>
</reference>
<feature type="chain" id="PRO_0000112491" description="Putative [LysW]-L-2-aminoadipate/[LysW]-L-glutamate phosphate reductase">
    <location>
        <begin position="1"/>
        <end position="347"/>
    </location>
</feature>
<feature type="active site" evidence="1">
    <location>
        <position position="149"/>
    </location>
</feature>
<feature type="binding site" evidence="1">
    <location>
        <begin position="9"/>
        <end position="12"/>
    </location>
    <ligand>
        <name>NADP(+)</name>
        <dbReference type="ChEBI" id="CHEBI:58349"/>
    </ligand>
</feature>
<feature type="binding site" evidence="1">
    <location>
        <position position="314"/>
    </location>
    <ligand>
        <name>NADP(+)</name>
        <dbReference type="ChEBI" id="CHEBI:58349"/>
    </ligand>
</feature>
<name>LYSY_PICTO</name>
<accession>Q6KYZ5</accession>